<feature type="signal peptide" evidence="1">
    <location>
        <begin position="1"/>
        <end position="28"/>
    </location>
</feature>
<feature type="chain" id="PRO_0000300220" description="UPF0482 protein YnfB">
    <location>
        <begin position="29"/>
        <end position="113"/>
    </location>
</feature>
<protein>
    <recommendedName>
        <fullName evidence="1">UPF0482 protein YnfB</fullName>
    </recommendedName>
</protein>
<evidence type="ECO:0000255" key="1">
    <source>
        <dbReference type="HAMAP-Rule" id="MF_01581"/>
    </source>
</evidence>
<name>YNFB_ECOUT</name>
<sequence length="113" mass="12974">MKITLSKRIGLLAFLLPCALALSTTVHAETNKLVIESGDSAQSRQRAAMEKEQWNDTRNLRQKVNKRTEKEWDKADAAFDNRDKCEQSANINAYWEPNTLRCLDRRTGRVIIP</sequence>
<comment type="similarity">
    <text evidence="1">Belongs to the UPF0482 family.</text>
</comment>
<gene>
    <name evidence="1" type="primary">ynfB</name>
    <name type="ordered locus">UTI89_C1770</name>
</gene>
<reference key="1">
    <citation type="journal article" date="2006" name="Proc. Natl. Acad. Sci. U.S.A.">
        <title>Identification of genes subject to positive selection in uropathogenic strains of Escherichia coli: a comparative genomics approach.</title>
        <authorList>
            <person name="Chen S.L."/>
            <person name="Hung C.-S."/>
            <person name="Xu J."/>
            <person name="Reigstad C.S."/>
            <person name="Magrini V."/>
            <person name="Sabo A."/>
            <person name="Blasiar D."/>
            <person name="Bieri T."/>
            <person name="Meyer R.R."/>
            <person name="Ozersky P."/>
            <person name="Armstrong J.R."/>
            <person name="Fulton R.S."/>
            <person name="Latreille J.P."/>
            <person name="Spieth J."/>
            <person name="Hooton T.M."/>
            <person name="Mardis E.R."/>
            <person name="Hultgren S.J."/>
            <person name="Gordon J.I."/>
        </authorList>
    </citation>
    <scope>NUCLEOTIDE SEQUENCE [LARGE SCALE GENOMIC DNA]</scope>
    <source>
        <strain>UTI89 / UPEC</strain>
    </source>
</reference>
<accession>Q1RBL6</accession>
<proteinExistence type="inferred from homology"/>
<dbReference type="EMBL" id="CP000243">
    <property type="protein sequence ID" value="ABE07248.1"/>
    <property type="molecule type" value="Genomic_DNA"/>
</dbReference>
<dbReference type="RefSeq" id="WP_000705201.1">
    <property type="nucleotide sequence ID" value="NZ_CP064825.1"/>
</dbReference>
<dbReference type="KEGG" id="eci:UTI89_C1770"/>
<dbReference type="HOGENOM" id="CLU_167574_0_0_6"/>
<dbReference type="Proteomes" id="UP000001952">
    <property type="component" value="Chromosome"/>
</dbReference>
<dbReference type="HAMAP" id="MF_01581">
    <property type="entry name" value="UPF0482"/>
    <property type="match status" value="1"/>
</dbReference>
<dbReference type="InterPro" id="IPR009700">
    <property type="entry name" value="DUF1283"/>
</dbReference>
<dbReference type="NCBIfam" id="NF010180">
    <property type="entry name" value="PRK13659.1"/>
    <property type="match status" value="1"/>
</dbReference>
<dbReference type="Pfam" id="PF06932">
    <property type="entry name" value="DUF1283"/>
    <property type="match status" value="1"/>
</dbReference>
<organism>
    <name type="scientific">Escherichia coli (strain UTI89 / UPEC)</name>
    <dbReference type="NCBI Taxonomy" id="364106"/>
    <lineage>
        <taxon>Bacteria</taxon>
        <taxon>Pseudomonadati</taxon>
        <taxon>Pseudomonadota</taxon>
        <taxon>Gammaproteobacteria</taxon>
        <taxon>Enterobacterales</taxon>
        <taxon>Enterobacteriaceae</taxon>
        <taxon>Escherichia</taxon>
    </lineage>
</organism>
<keyword id="KW-0732">Signal</keyword>